<dbReference type="EC" id="4.2.1.11" evidence="1"/>
<dbReference type="EMBL" id="CP000478">
    <property type="protein sequence ID" value="ABK15781.1"/>
    <property type="molecule type" value="Genomic_DNA"/>
</dbReference>
<dbReference type="RefSeq" id="WP_011696954.1">
    <property type="nucleotide sequence ID" value="NC_008554.1"/>
</dbReference>
<dbReference type="SMR" id="A0LEC9"/>
<dbReference type="FunCoup" id="A0LEC9">
    <property type="interactions" value="504"/>
</dbReference>
<dbReference type="STRING" id="335543.Sfum_0078"/>
<dbReference type="KEGG" id="sfu:Sfum_0078"/>
<dbReference type="eggNOG" id="COG0148">
    <property type="taxonomic scope" value="Bacteria"/>
</dbReference>
<dbReference type="HOGENOM" id="CLU_031223_2_1_7"/>
<dbReference type="InParanoid" id="A0LEC9"/>
<dbReference type="OrthoDB" id="9804716at2"/>
<dbReference type="UniPathway" id="UPA00109">
    <property type="reaction ID" value="UER00187"/>
</dbReference>
<dbReference type="Proteomes" id="UP000001784">
    <property type="component" value="Chromosome"/>
</dbReference>
<dbReference type="GO" id="GO:0009986">
    <property type="term" value="C:cell surface"/>
    <property type="evidence" value="ECO:0007669"/>
    <property type="project" value="UniProtKB-SubCell"/>
</dbReference>
<dbReference type="GO" id="GO:0005576">
    <property type="term" value="C:extracellular region"/>
    <property type="evidence" value="ECO:0007669"/>
    <property type="project" value="UniProtKB-SubCell"/>
</dbReference>
<dbReference type="GO" id="GO:0000015">
    <property type="term" value="C:phosphopyruvate hydratase complex"/>
    <property type="evidence" value="ECO:0007669"/>
    <property type="project" value="InterPro"/>
</dbReference>
<dbReference type="GO" id="GO:0000287">
    <property type="term" value="F:magnesium ion binding"/>
    <property type="evidence" value="ECO:0007669"/>
    <property type="project" value="UniProtKB-UniRule"/>
</dbReference>
<dbReference type="GO" id="GO:0004634">
    <property type="term" value="F:phosphopyruvate hydratase activity"/>
    <property type="evidence" value="ECO:0007669"/>
    <property type="project" value="UniProtKB-UniRule"/>
</dbReference>
<dbReference type="GO" id="GO:0006096">
    <property type="term" value="P:glycolytic process"/>
    <property type="evidence" value="ECO:0007669"/>
    <property type="project" value="UniProtKB-UniRule"/>
</dbReference>
<dbReference type="CDD" id="cd03313">
    <property type="entry name" value="enolase"/>
    <property type="match status" value="1"/>
</dbReference>
<dbReference type="FunFam" id="3.20.20.120:FF:000001">
    <property type="entry name" value="Enolase"/>
    <property type="match status" value="1"/>
</dbReference>
<dbReference type="FunFam" id="3.30.390.10:FF:000001">
    <property type="entry name" value="Enolase"/>
    <property type="match status" value="1"/>
</dbReference>
<dbReference type="Gene3D" id="3.20.20.120">
    <property type="entry name" value="Enolase-like C-terminal domain"/>
    <property type="match status" value="1"/>
</dbReference>
<dbReference type="Gene3D" id="3.30.390.10">
    <property type="entry name" value="Enolase-like, N-terminal domain"/>
    <property type="match status" value="1"/>
</dbReference>
<dbReference type="HAMAP" id="MF_00318">
    <property type="entry name" value="Enolase"/>
    <property type="match status" value="1"/>
</dbReference>
<dbReference type="InterPro" id="IPR000941">
    <property type="entry name" value="Enolase"/>
</dbReference>
<dbReference type="InterPro" id="IPR036849">
    <property type="entry name" value="Enolase-like_C_sf"/>
</dbReference>
<dbReference type="InterPro" id="IPR029017">
    <property type="entry name" value="Enolase-like_N"/>
</dbReference>
<dbReference type="InterPro" id="IPR020810">
    <property type="entry name" value="Enolase_C"/>
</dbReference>
<dbReference type="InterPro" id="IPR020809">
    <property type="entry name" value="Enolase_CS"/>
</dbReference>
<dbReference type="InterPro" id="IPR020811">
    <property type="entry name" value="Enolase_N"/>
</dbReference>
<dbReference type="NCBIfam" id="TIGR01060">
    <property type="entry name" value="eno"/>
    <property type="match status" value="1"/>
</dbReference>
<dbReference type="PANTHER" id="PTHR11902">
    <property type="entry name" value="ENOLASE"/>
    <property type="match status" value="1"/>
</dbReference>
<dbReference type="PANTHER" id="PTHR11902:SF1">
    <property type="entry name" value="ENOLASE"/>
    <property type="match status" value="1"/>
</dbReference>
<dbReference type="Pfam" id="PF00113">
    <property type="entry name" value="Enolase_C"/>
    <property type="match status" value="1"/>
</dbReference>
<dbReference type="Pfam" id="PF03952">
    <property type="entry name" value="Enolase_N"/>
    <property type="match status" value="1"/>
</dbReference>
<dbReference type="PIRSF" id="PIRSF001400">
    <property type="entry name" value="Enolase"/>
    <property type="match status" value="1"/>
</dbReference>
<dbReference type="PRINTS" id="PR00148">
    <property type="entry name" value="ENOLASE"/>
</dbReference>
<dbReference type="SFLD" id="SFLDS00001">
    <property type="entry name" value="Enolase"/>
    <property type="match status" value="1"/>
</dbReference>
<dbReference type="SFLD" id="SFLDF00002">
    <property type="entry name" value="enolase"/>
    <property type="match status" value="1"/>
</dbReference>
<dbReference type="SMART" id="SM01192">
    <property type="entry name" value="Enolase_C"/>
    <property type="match status" value="1"/>
</dbReference>
<dbReference type="SMART" id="SM01193">
    <property type="entry name" value="Enolase_N"/>
    <property type="match status" value="1"/>
</dbReference>
<dbReference type="SUPFAM" id="SSF51604">
    <property type="entry name" value="Enolase C-terminal domain-like"/>
    <property type="match status" value="1"/>
</dbReference>
<dbReference type="SUPFAM" id="SSF54826">
    <property type="entry name" value="Enolase N-terminal domain-like"/>
    <property type="match status" value="1"/>
</dbReference>
<dbReference type="PROSITE" id="PS00164">
    <property type="entry name" value="ENOLASE"/>
    <property type="match status" value="1"/>
</dbReference>
<name>ENO_SYNFM</name>
<keyword id="KW-0963">Cytoplasm</keyword>
<keyword id="KW-0324">Glycolysis</keyword>
<keyword id="KW-0456">Lyase</keyword>
<keyword id="KW-0460">Magnesium</keyword>
<keyword id="KW-0479">Metal-binding</keyword>
<keyword id="KW-1185">Reference proteome</keyword>
<keyword id="KW-0964">Secreted</keyword>
<protein>
    <recommendedName>
        <fullName evidence="1">Enolase</fullName>
        <ecNumber evidence="1">4.2.1.11</ecNumber>
    </recommendedName>
    <alternativeName>
        <fullName evidence="1">2-phospho-D-glycerate hydro-lyase</fullName>
    </alternativeName>
    <alternativeName>
        <fullName evidence="1">2-phosphoglycerate dehydratase</fullName>
    </alternativeName>
</protein>
<feature type="chain" id="PRO_0000280881" description="Enolase">
    <location>
        <begin position="1"/>
        <end position="426"/>
    </location>
</feature>
<feature type="active site" description="Proton donor" evidence="1">
    <location>
        <position position="205"/>
    </location>
</feature>
<feature type="active site" description="Proton acceptor" evidence="1">
    <location>
        <position position="338"/>
    </location>
</feature>
<feature type="binding site" evidence="1">
    <location>
        <position position="163"/>
    </location>
    <ligand>
        <name>(2R)-2-phosphoglycerate</name>
        <dbReference type="ChEBI" id="CHEBI:58289"/>
    </ligand>
</feature>
<feature type="binding site" evidence="1">
    <location>
        <position position="242"/>
    </location>
    <ligand>
        <name>Mg(2+)</name>
        <dbReference type="ChEBI" id="CHEBI:18420"/>
    </ligand>
</feature>
<feature type="binding site" evidence="1">
    <location>
        <position position="286"/>
    </location>
    <ligand>
        <name>Mg(2+)</name>
        <dbReference type="ChEBI" id="CHEBI:18420"/>
    </ligand>
</feature>
<feature type="binding site" evidence="1">
    <location>
        <position position="313"/>
    </location>
    <ligand>
        <name>Mg(2+)</name>
        <dbReference type="ChEBI" id="CHEBI:18420"/>
    </ligand>
</feature>
<feature type="binding site" evidence="1">
    <location>
        <position position="338"/>
    </location>
    <ligand>
        <name>(2R)-2-phosphoglycerate</name>
        <dbReference type="ChEBI" id="CHEBI:58289"/>
    </ligand>
</feature>
<feature type="binding site" evidence="1">
    <location>
        <position position="367"/>
    </location>
    <ligand>
        <name>(2R)-2-phosphoglycerate</name>
        <dbReference type="ChEBI" id="CHEBI:58289"/>
    </ligand>
</feature>
<feature type="binding site" evidence="1">
    <location>
        <position position="368"/>
    </location>
    <ligand>
        <name>(2R)-2-phosphoglycerate</name>
        <dbReference type="ChEBI" id="CHEBI:58289"/>
    </ligand>
</feature>
<feature type="binding site" evidence="1">
    <location>
        <position position="389"/>
    </location>
    <ligand>
        <name>(2R)-2-phosphoglycerate</name>
        <dbReference type="ChEBI" id="CHEBI:58289"/>
    </ligand>
</feature>
<organism>
    <name type="scientific">Syntrophobacter fumaroxidans (strain DSM 10017 / MPOB)</name>
    <dbReference type="NCBI Taxonomy" id="335543"/>
    <lineage>
        <taxon>Bacteria</taxon>
        <taxon>Pseudomonadati</taxon>
        <taxon>Thermodesulfobacteriota</taxon>
        <taxon>Syntrophobacteria</taxon>
        <taxon>Syntrophobacterales</taxon>
        <taxon>Syntrophobacteraceae</taxon>
        <taxon>Syntrophobacter</taxon>
    </lineage>
</organism>
<gene>
    <name evidence="1" type="primary">eno</name>
    <name type="ordered locus">Sfum_0078</name>
</gene>
<sequence>MSEILSVKAREILDSRGNPTVEAEVILDSGYSGTAAVPSGASTGSREALELRDGDPARYLGKGVLQAVQNVNDEIAPKVIGMDGRDQVGLDSFLIELDGTENKGRLGANAILSVSMAAAKAAAAECELPLYRYLGGAMASLLPVPMMNVINGGAHADNNVDIQEFMIVPAGAPTFGEALRMGAETFHNLKKVLKSKGLNTAVGDEGGFAPNLSSNEEAMEVLMQAIEAAGYRPGEDIYIAIDAAASEFYKDGSYHMSAEQSPTKSAEEMIAFYEAWAGRYPLICIEDGMAEGDWGGWQALTRKLGYNVQLVGDDVFVTNTSIIAKGIADGVANSVLIKLNQIGTVTETLQAINMAFKAGYTVVISHRSGETEDTTIADLAVATNAGQIKTGSLSRSERIAKYNQLLRIEEELGASGCYAGMSAFRV</sequence>
<proteinExistence type="inferred from homology"/>
<evidence type="ECO:0000255" key="1">
    <source>
        <dbReference type="HAMAP-Rule" id="MF_00318"/>
    </source>
</evidence>
<comment type="function">
    <text evidence="1">Catalyzes the reversible conversion of 2-phosphoglycerate (2-PG) into phosphoenolpyruvate (PEP). It is essential for the degradation of carbohydrates via glycolysis.</text>
</comment>
<comment type="catalytic activity">
    <reaction evidence="1">
        <text>(2R)-2-phosphoglycerate = phosphoenolpyruvate + H2O</text>
        <dbReference type="Rhea" id="RHEA:10164"/>
        <dbReference type="ChEBI" id="CHEBI:15377"/>
        <dbReference type="ChEBI" id="CHEBI:58289"/>
        <dbReference type="ChEBI" id="CHEBI:58702"/>
        <dbReference type="EC" id="4.2.1.11"/>
    </reaction>
</comment>
<comment type="cofactor">
    <cofactor evidence="1">
        <name>Mg(2+)</name>
        <dbReference type="ChEBI" id="CHEBI:18420"/>
    </cofactor>
    <text evidence="1">Binds a second Mg(2+) ion via substrate during catalysis.</text>
</comment>
<comment type="pathway">
    <text evidence="1">Carbohydrate degradation; glycolysis; pyruvate from D-glyceraldehyde 3-phosphate: step 4/5.</text>
</comment>
<comment type="subcellular location">
    <subcellularLocation>
        <location evidence="1">Cytoplasm</location>
    </subcellularLocation>
    <subcellularLocation>
        <location evidence="1">Secreted</location>
    </subcellularLocation>
    <subcellularLocation>
        <location evidence="1">Cell surface</location>
    </subcellularLocation>
    <text evidence="1">Fractions of enolase are present in both the cytoplasm and on the cell surface.</text>
</comment>
<comment type="similarity">
    <text evidence="1">Belongs to the enolase family.</text>
</comment>
<reference key="1">
    <citation type="submission" date="2006-10" db="EMBL/GenBank/DDBJ databases">
        <title>Complete sequence of Syntrophobacter fumaroxidans MPOB.</title>
        <authorList>
            <consortium name="US DOE Joint Genome Institute"/>
            <person name="Copeland A."/>
            <person name="Lucas S."/>
            <person name="Lapidus A."/>
            <person name="Barry K."/>
            <person name="Detter J.C."/>
            <person name="Glavina del Rio T."/>
            <person name="Hammon N."/>
            <person name="Israni S."/>
            <person name="Pitluck S."/>
            <person name="Goltsman E.G."/>
            <person name="Martinez M."/>
            <person name="Schmutz J."/>
            <person name="Larimer F."/>
            <person name="Land M."/>
            <person name="Hauser L."/>
            <person name="Kyrpides N."/>
            <person name="Kim E."/>
            <person name="Boone D.R."/>
            <person name="Brockman F."/>
            <person name="Culley D."/>
            <person name="Ferry J."/>
            <person name="Gunsalus R."/>
            <person name="McInerney M.J."/>
            <person name="Morrison M."/>
            <person name="Plugge C."/>
            <person name="Rohlin L."/>
            <person name="Scholten J."/>
            <person name="Sieber J."/>
            <person name="Stams A.J.M."/>
            <person name="Worm P."/>
            <person name="Henstra A.M."/>
            <person name="Richardson P."/>
        </authorList>
    </citation>
    <scope>NUCLEOTIDE SEQUENCE [LARGE SCALE GENOMIC DNA]</scope>
    <source>
        <strain>DSM 10017 / MPOB</strain>
    </source>
</reference>
<accession>A0LEC9</accession>